<organism>
    <name type="scientific">Homo sapiens</name>
    <name type="common">Human</name>
    <dbReference type="NCBI Taxonomy" id="9606"/>
    <lineage>
        <taxon>Eukaryota</taxon>
        <taxon>Metazoa</taxon>
        <taxon>Chordata</taxon>
        <taxon>Craniata</taxon>
        <taxon>Vertebrata</taxon>
        <taxon>Euteleostomi</taxon>
        <taxon>Mammalia</taxon>
        <taxon>Eutheria</taxon>
        <taxon>Euarchontoglires</taxon>
        <taxon>Primates</taxon>
        <taxon>Haplorrhini</taxon>
        <taxon>Catarrhini</taxon>
        <taxon>Hominidae</taxon>
        <taxon>Homo</taxon>
    </lineage>
</organism>
<reference key="1">
    <citation type="journal article" date="2004" name="Nat. Genet.">
        <title>Complete sequencing and characterization of 21,243 full-length human cDNAs.</title>
        <authorList>
            <person name="Ota T."/>
            <person name="Suzuki Y."/>
            <person name="Nishikawa T."/>
            <person name="Otsuki T."/>
            <person name="Sugiyama T."/>
            <person name="Irie R."/>
            <person name="Wakamatsu A."/>
            <person name="Hayashi K."/>
            <person name="Sato H."/>
            <person name="Nagai K."/>
            <person name="Kimura K."/>
            <person name="Makita H."/>
            <person name="Sekine M."/>
            <person name="Obayashi M."/>
            <person name="Nishi T."/>
            <person name="Shibahara T."/>
            <person name="Tanaka T."/>
            <person name="Ishii S."/>
            <person name="Yamamoto J."/>
            <person name="Saito K."/>
            <person name="Kawai Y."/>
            <person name="Isono Y."/>
            <person name="Nakamura Y."/>
            <person name="Nagahari K."/>
            <person name="Murakami K."/>
            <person name="Yasuda T."/>
            <person name="Iwayanagi T."/>
            <person name="Wagatsuma M."/>
            <person name="Shiratori A."/>
            <person name="Sudo H."/>
            <person name="Hosoiri T."/>
            <person name="Kaku Y."/>
            <person name="Kodaira H."/>
            <person name="Kondo H."/>
            <person name="Sugawara M."/>
            <person name="Takahashi M."/>
            <person name="Kanda K."/>
            <person name="Yokoi T."/>
            <person name="Furuya T."/>
            <person name="Kikkawa E."/>
            <person name="Omura Y."/>
            <person name="Abe K."/>
            <person name="Kamihara K."/>
            <person name="Katsuta N."/>
            <person name="Sato K."/>
            <person name="Tanikawa M."/>
            <person name="Yamazaki M."/>
            <person name="Ninomiya K."/>
            <person name="Ishibashi T."/>
            <person name="Yamashita H."/>
            <person name="Murakawa K."/>
            <person name="Fujimori K."/>
            <person name="Tanai H."/>
            <person name="Kimata M."/>
            <person name="Watanabe M."/>
            <person name="Hiraoka S."/>
            <person name="Chiba Y."/>
            <person name="Ishida S."/>
            <person name="Ono Y."/>
            <person name="Takiguchi S."/>
            <person name="Watanabe S."/>
            <person name="Yosida M."/>
            <person name="Hotuta T."/>
            <person name="Kusano J."/>
            <person name="Kanehori K."/>
            <person name="Takahashi-Fujii A."/>
            <person name="Hara H."/>
            <person name="Tanase T.-O."/>
            <person name="Nomura Y."/>
            <person name="Togiya S."/>
            <person name="Komai F."/>
            <person name="Hara R."/>
            <person name="Takeuchi K."/>
            <person name="Arita M."/>
            <person name="Imose N."/>
            <person name="Musashino K."/>
            <person name="Yuuki H."/>
            <person name="Oshima A."/>
            <person name="Sasaki N."/>
            <person name="Aotsuka S."/>
            <person name="Yoshikawa Y."/>
            <person name="Matsunawa H."/>
            <person name="Ichihara T."/>
            <person name="Shiohata N."/>
            <person name="Sano S."/>
            <person name="Moriya S."/>
            <person name="Momiyama H."/>
            <person name="Satoh N."/>
            <person name="Takami S."/>
            <person name="Terashima Y."/>
            <person name="Suzuki O."/>
            <person name="Nakagawa S."/>
            <person name="Senoh A."/>
            <person name="Mizoguchi H."/>
            <person name="Goto Y."/>
            <person name="Shimizu F."/>
            <person name="Wakebe H."/>
            <person name="Hishigaki H."/>
            <person name="Watanabe T."/>
            <person name="Sugiyama A."/>
            <person name="Takemoto M."/>
            <person name="Kawakami B."/>
            <person name="Yamazaki M."/>
            <person name="Watanabe K."/>
            <person name="Kumagai A."/>
            <person name="Itakura S."/>
            <person name="Fukuzumi Y."/>
            <person name="Fujimori Y."/>
            <person name="Komiyama M."/>
            <person name="Tashiro H."/>
            <person name="Tanigami A."/>
            <person name="Fujiwara T."/>
            <person name="Ono T."/>
            <person name="Yamada K."/>
            <person name="Fujii Y."/>
            <person name="Ozaki K."/>
            <person name="Hirao M."/>
            <person name="Ohmori Y."/>
            <person name="Kawabata A."/>
            <person name="Hikiji T."/>
            <person name="Kobatake N."/>
            <person name="Inagaki H."/>
            <person name="Ikema Y."/>
            <person name="Okamoto S."/>
            <person name="Okitani R."/>
            <person name="Kawakami T."/>
            <person name="Noguchi S."/>
            <person name="Itoh T."/>
            <person name="Shigeta K."/>
            <person name="Senba T."/>
            <person name="Matsumura K."/>
            <person name="Nakajima Y."/>
            <person name="Mizuno T."/>
            <person name="Morinaga M."/>
            <person name="Sasaki M."/>
            <person name="Togashi T."/>
            <person name="Oyama M."/>
            <person name="Hata H."/>
            <person name="Watanabe M."/>
            <person name="Komatsu T."/>
            <person name="Mizushima-Sugano J."/>
            <person name="Satoh T."/>
            <person name="Shirai Y."/>
            <person name="Takahashi Y."/>
            <person name="Nakagawa K."/>
            <person name="Okumura K."/>
            <person name="Nagase T."/>
            <person name="Nomura N."/>
            <person name="Kikuchi H."/>
            <person name="Masuho Y."/>
            <person name="Yamashita R."/>
            <person name="Nakai K."/>
            <person name="Yada T."/>
            <person name="Nakamura Y."/>
            <person name="Ohara O."/>
            <person name="Isogai T."/>
            <person name="Sugano S."/>
        </authorList>
    </citation>
    <scope>NUCLEOTIDE SEQUENCE [LARGE SCALE MRNA] (ISOFORM 3)</scope>
    <scope>NUCLEOTIDE SEQUENCE [LARGE SCALE MRNA] OF 127-372 (ISOFORM 2)</scope>
</reference>
<reference key="2">
    <citation type="journal article" date="2004" name="Nature">
        <title>The DNA sequence and comparative analysis of human chromosome 10.</title>
        <authorList>
            <person name="Deloukas P."/>
            <person name="Earthrowl M.E."/>
            <person name="Grafham D.V."/>
            <person name="Rubenfield M."/>
            <person name="French L."/>
            <person name="Steward C.A."/>
            <person name="Sims S.K."/>
            <person name="Jones M.C."/>
            <person name="Searle S."/>
            <person name="Scott C."/>
            <person name="Howe K."/>
            <person name="Hunt S.E."/>
            <person name="Andrews T.D."/>
            <person name="Gilbert J.G.R."/>
            <person name="Swarbreck D."/>
            <person name="Ashurst J.L."/>
            <person name="Taylor A."/>
            <person name="Battles J."/>
            <person name="Bird C.P."/>
            <person name="Ainscough R."/>
            <person name="Almeida J.P."/>
            <person name="Ashwell R.I.S."/>
            <person name="Ambrose K.D."/>
            <person name="Babbage A.K."/>
            <person name="Bagguley C.L."/>
            <person name="Bailey J."/>
            <person name="Banerjee R."/>
            <person name="Bates K."/>
            <person name="Beasley H."/>
            <person name="Bray-Allen S."/>
            <person name="Brown A.J."/>
            <person name="Brown J.Y."/>
            <person name="Burford D.C."/>
            <person name="Burrill W."/>
            <person name="Burton J."/>
            <person name="Cahill P."/>
            <person name="Camire D."/>
            <person name="Carter N.P."/>
            <person name="Chapman J.C."/>
            <person name="Clark S.Y."/>
            <person name="Clarke G."/>
            <person name="Clee C.M."/>
            <person name="Clegg S."/>
            <person name="Corby N."/>
            <person name="Coulson A."/>
            <person name="Dhami P."/>
            <person name="Dutta I."/>
            <person name="Dunn M."/>
            <person name="Faulkner L."/>
            <person name="Frankish A."/>
            <person name="Frankland J.A."/>
            <person name="Garner P."/>
            <person name="Garnett J."/>
            <person name="Gribble S."/>
            <person name="Griffiths C."/>
            <person name="Grocock R."/>
            <person name="Gustafson E."/>
            <person name="Hammond S."/>
            <person name="Harley J.L."/>
            <person name="Hart E."/>
            <person name="Heath P.D."/>
            <person name="Ho T.P."/>
            <person name="Hopkins B."/>
            <person name="Horne J."/>
            <person name="Howden P.J."/>
            <person name="Huckle E."/>
            <person name="Hynds C."/>
            <person name="Johnson C."/>
            <person name="Johnson D."/>
            <person name="Kana A."/>
            <person name="Kay M."/>
            <person name="Kimberley A.M."/>
            <person name="Kershaw J.K."/>
            <person name="Kokkinaki M."/>
            <person name="Laird G.K."/>
            <person name="Lawlor S."/>
            <person name="Lee H.M."/>
            <person name="Leongamornlert D.A."/>
            <person name="Laird G."/>
            <person name="Lloyd C."/>
            <person name="Lloyd D.M."/>
            <person name="Loveland J."/>
            <person name="Lovell J."/>
            <person name="McLaren S."/>
            <person name="McLay K.E."/>
            <person name="McMurray A."/>
            <person name="Mashreghi-Mohammadi M."/>
            <person name="Matthews L."/>
            <person name="Milne S."/>
            <person name="Nickerson T."/>
            <person name="Nguyen M."/>
            <person name="Overton-Larty E."/>
            <person name="Palmer S.A."/>
            <person name="Pearce A.V."/>
            <person name="Peck A.I."/>
            <person name="Pelan S."/>
            <person name="Phillimore B."/>
            <person name="Porter K."/>
            <person name="Rice C.M."/>
            <person name="Rogosin A."/>
            <person name="Ross M.T."/>
            <person name="Sarafidou T."/>
            <person name="Sehra H.K."/>
            <person name="Shownkeen R."/>
            <person name="Skuce C.D."/>
            <person name="Smith M."/>
            <person name="Standring L."/>
            <person name="Sycamore N."/>
            <person name="Tester J."/>
            <person name="Thorpe A."/>
            <person name="Torcasso W."/>
            <person name="Tracey A."/>
            <person name="Tromans A."/>
            <person name="Tsolas J."/>
            <person name="Wall M."/>
            <person name="Walsh J."/>
            <person name="Wang H."/>
            <person name="Weinstock K."/>
            <person name="West A.P."/>
            <person name="Willey D.L."/>
            <person name="Whitehead S.L."/>
            <person name="Wilming L."/>
            <person name="Wray P.W."/>
            <person name="Young L."/>
            <person name="Chen Y."/>
            <person name="Lovering R.C."/>
            <person name="Moschonas N.K."/>
            <person name="Siebert R."/>
            <person name="Fechtel K."/>
            <person name="Bentley D."/>
            <person name="Durbin R.M."/>
            <person name="Hubbard T."/>
            <person name="Doucette-Stamm L."/>
            <person name="Beck S."/>
            <person name="Smith D.R."/>
            <person name="Rogers J."/>
        </authorList>
    </citation>
    <scope>NUCLEOTIDE SEQUENCE [LARGE SCALE GENOMIC DNA]</scope>
</reference>
<reference key="3">
    <citation type="journal article" date="2004" name="Genome Res.">
        <title>The status, quality, and expansion of the NIH full-length cDNA project: the Mammalian Gene Collection (MGC).</title>
        <authorList>
            <consortium name="The MGC Project Team"/>
        </authorList>
    </citation>
    <scope>NUCLEOTIDE SEQUENCE [LARGE SCALE MRNA] (ISOFORM 1)</scope>
    <source>
        <tissue>Brain</tissue>
    </source>
</reference>
<feature type="chain" id="PRO_0000309316" description="Cyclin-J">
    <location>
        <begin position="1"/>
        <end position="372"/>
    </location>
</feature>
<feature type="domain" description="Cyclin N-terminal">
    <location>
        <begin position="15"/>
        <end position="143"/>
    </location>
</feature>
<feature type="splice variant" id="VSP_041163" description="In isoform 3." evidence="1">
    <original>Q</original>
    <variation>QDYAFLNYAPSL</variation>
    <location>
        <position position="193"/>
    </location>
</feature>
<feature type="splice variant" id="VSP_029128" description="In isoform 2." evidence="1">
    <location>
        <position position="194"/>
    </location>
</feature>
<gene>
    <name type="primary">CCNJ</name>
</gene>
<comment type="alternative products">
    <event type="alternative splicing"/>
    <isoform>
        <id>Q5T5M9-1</id>
        <name>1</name>
        <sequence type="displayed"/>
    </isoform>
    <isoform>
        <id>Q5T5M9-2</id>
        <name>2</name>
        <sequence type="described" ref="VSP_029128"/>
    </isoform>
    <isoform>
        <id>Q5T5M9-3</id>
        <name>3</name>
        <sequence type="described" ref="VSP_041163"/>
    </isoform>
</comment>
<comment type="similarity">
    <text evidence="2">Belongs to the cyclin family.</text>
</comment>
<comment type="sequence caution" evidence="2">
    <conflict type="erroneous initiation">
        <sequence resource="EMBL-CDS" id="BAA91887"/>
    </conflict>
</comment>
<protein>
    <recommendedName>
        <fullName>Cyclin-J</fullName>
    </recommendedName>
</protein>
<evidence type="ECO:0000303" key="1">
    <source>
    </source>
</evidence>
<evidence type="ECO:0000305" key="2"/>
<keyword id="KW-0025">Alternative splicing</keyword>
<keyword id="KW-0195">Cyclin</keyword>
<keyword id="KW-1267">Proteomics identification</keyword>
<keyword id="KW-1185">Reference proteome</keyword>
<name>CCNJ_HUMAN</name>
<sequence length="372" mass="42581">MELEGQWWRGQLAADIHQALRYKELKLPSYKGQSPQLSLRRYFADLIAIVSNRFTLCPSARHLAVYLLDLFMDRYDISIQQLHLVALSCLLLASKFEEKEDSVPKLEQLNSLGCMTNMNLVLTKQNLLHMELLLLETFQWNLCLPTAAHFIEYYLSEAVHETDLHDGWPMICLEKTKLYMAKYADYFLEVSLQVAAACVASSRIILRLSPTWPTRLHRLTAYSWDFLVQCIERLLIAHDNDVKEANKQRGQAGPQSAQLSVFQTASQPSRPVHFQQPQYLHQTHQTSLQYRHPTSEQPSCQQIVSTTHTSSYTLQTCPAGFQTSVQGLGHMQTGVGMSLAIPVEVKPCLSVSYNRSYQINEHYPCITPCFER</sequence>
<dbReference type="EMBL" id="AK001757">
    <property type="protein sequence ID" value="BAA91887.1"/>
    <property type="status" value="ALT_INIT"/>
    <property type="molecule type" value="mRNA"/>
</dbReference>
<dbReference type="EMBL" id="AK297264">
    <property type="protein sequence ID" value="BAH12533.1"/>
    <property type="molecule type" value="mRNA"/>
</dbReference>
<dbReference type="EMBL" id="AL356155">
    <property type="status" value="NOT_ANNOTATED_CDS"/>
    <property type="molecule type" value="Genomic_DNA"/>
</dbReference>
<dbReference type="EMBL" id="BC043175">
    <property type="protein sequence ID" value="AAH43175.1"/>
    <property type="molecule type" value="mRNA"/>
</dbReference>
<dbReference type="CCDS" id="CCDS44462.1">
    <molecule id="Q5T5M9-3"/>
</dbReference>
<dbReference type="CCDS" id="CCDS44463.1">
    <molecule id="Q5T5M9-2"/>
</dbReference>
<dbReference type="CCDS" id="CCDS7445.1">
    <molecule id="Q5T5M9-1"/>
</dbReference>
<dbReference type="RefSeq" id="NP_001127847.1">
    <molecule id="Q5T5M9-3"/>
    <property type="nucleotide sequence ID" value="NM_001134375.2"/>
</dbReference>
<dbReference type="RefSeq" id="NP_001127848.1">
    <molecule id="Q5T5M9-2"/>
    <property type="nucleotide sequence ID" value="NM_001134376.2"/>
</dbReference>
<dbReference type="RefSeq" id="NP_061957.2">
    <molecule id="Q5T5M9-1"/>
    <property type="nucleotide sequence ID" value="NM_019084.4"/>
</dbReference>
<dbReference type="RefSeq" id="XP_011538187.1">
    <molecule id="Q5T5M9-3"/>
    <property type="nucleotide sequence ID" value="XM_011539885.3"/>
</dbReference>
<dbReference type="RefSeq" id="XP_016871844.2">
    <molecule id="Q5T5M9-1"/>
    <property type="nucleotide sequence ID" value="XM_017016355.2"/>
</dbReference>
<dbReference type="RefSeq" id="XP_054222119.1">
    <molecule id="Q5T5M9-3"/>
    <property type="nucleotide sequence ID" value="XM_054366144.1"/>
</dbReference>
<dbReference type="SMR" id="Q5T5M9"/>
<dbReference type="BioGRID" id="120077">
    <property type="interactions" value="12"/>
</dbReference>
<dbReference type="FunCoup" id="Q5T5M9">
    <property type="interactions" value="1493"/>
</dbReference>
<dbReference type="IntAct" id="Q5T5M9">
    <property type="interactions" value="6"/>
</dbReference>
<dbReference type="STRING" id="9606.ENSP00000435373"/>
<dbReference type="iPTMnet" id="Q5T5M9"/>
<dbReference type="PhosphoSitePlus" id="Q5T5M9"/>
<dbReference type="BioMuta" id="CCNJ"/>
<dbReference type="DMDM" id="160380581"/>
<dbReference type="MassIVE" id="Q5T5M9"/>
<dbReference type="PaxDb" id="9606-ENSP00000435373"/>
<dbReference type="PeptideAtlas" id="Q5T5M9"/>
<dbReference type="ProteomicsDB" id="64530">
    <molecule id="Q5T5M9-1"/>
</dbReference>
<dbReference type="ProteomicsDB" id="64531">
    <molecule id="Q5T5M9-2"/>
</dbReference>
<dbReference type="ProteomicsDB" id="64532">
    <molecule id="Q5T5M9-3"/>
</dbReference>
<dbReference type="Antibodypedia" id="16889">
    <property type="antibodies" value="136 antibodies from 20 providers"/>
</dbReference>
<dbReference type="DNASU" id="54619"/>
<dbReference type="Ensembl" id="ENST00000265992.9">
    <molecule id="Q5T5M9-1"/>
    <property type="protein sequence ID" value="ENSP00000265992.5"/>
    <property type="gene ID" value="ENSG00000107443.16"/>
</dbReference>
<dbReference type="Ensembl" id="ENST00000403870.7">
    <molecule id="Q5T5M9-2"/>
    <property type="protein sequence ID" value="ENSP00000384498.2"/>
    <property type="gene ID" value="ENSG00000107443.16"/>
</dbReference>
<dbReference type="Ensembl" id="ENST00000465148.3">
    <molecule id="Q5T5M9-3"/>
    <property type="protein sequence ID" value="ENSP00000435373.2"/>
    <property type="gene ID" value="ENSG00000107443.16"/>
</dbReference>
<dbReference type="GeneID" id="54619"/>
<dbReference type="KEGG" id="hsa:54619"/>
<dbReference type="MANE-Select" id="ENST00000465148.3">
    <molecule id="Q5T5M9-3"/>
    <property type="protein sequence ID" value="ENSP00000435373.2"/>
    <property type="RefSeq nucleotide sequence ID" value="NM_001134375.2"/>
    <property type="RefSeq protein sequence ID" value="NP_001127847.1"/>
</dbReference>
<dbReference type="UCSC" id="uc001klm.4">
    <molecule id="Q5T5M9-1"/>
    <property type="organism name" value="human"/>
</dbReference>
<dbReference type="AGR" id="HGNC:23434"/>
<dbReference type="CTD" id="54619"/>
<dbReference type="DisGeNET" id="54619"/>
<dbReference type="GeneCards" id="CCNJ"/>
<dbReference type="HGNC" id="HGNC:23434">
    <property type="gene designation" value="CCNJ"/>
</dbReference>
<dbReference type="HPA" id="ENSG00000107443">
    <property type="expression patterns" value="Low tissue specificity"/>
</dbReference>
<dbReference type="MIM" id="620395">
    <property type="type" value="gene"/>
</dbReference>
<dbReference type="neXtProt" id="NX_Q5T5M9"/>
<dbReference type="OpenTargets" id="ENSG00000107443"/>
<dbReference type="PharmGKB" id="PA134911603"/>
<dbReference type="VEuPathDB" id="HostDB:ENSG00000107443"/>
<dbReference type="eggNOG" id="ENOG502QWGF">
    <property type="taxonomic scope" value="Eukaryota"/>
</dbReference>
<dbReference type="GeneTree" id="ENSGT00940000156981"/>
<dbReference type="HOGENOM" id="CLU_063883_0_1_1"/>
<dbReference type="InParanoid" id="Q5T5M9"/>
<dbReference type="OMA" id="FLMQCIE"/>
<dbReference type="OrthoDB" id="285802at2759"/>
<dbReference type="PAN-GO" id="Q5T5M9">
    <property type="GO annotations" value="7 GO annotations based on evolutionary models"/>
</dbReference>
<dbReference type="PhylomeDB" id="Q5T5M9"/>
<dbReference type="TreeFam" id="TF101009"/>
<dbReference type="PathwayCommons" id="Q5T5M9"/>
<dbReference type="SignaLink" id="Q5T5M9"/>
<dbReference type="BioGRID-ORCS" id="54619">
    <property type="hits" value="16 hits in 1158 CRISPR screens"/>
</dbReference>
<dbReference type="GenomeRNAi" id="54619"/>
<dbReference type="Pharos" id="Q5T5M9">
    <property type="development level" value="Tbio"/>
</dbReference>
<dbReference type="PRO" id="PR:Q5T5M9"/>
<dbReference type="Proteomes" id="UP000005640">
    <property type="component" value="Chromosome 10"/>
</dbReference>
<dbReference type="RNAct" id="Q5T5M9">
    <property type="molecule type" value="protein"/>
</dbReference>
<dbReference type="Bgee" id="ENSG00000107443">
    <property type="expression patterns" value="Expressed in secondary oocyte and 182 other cell types or tissues"/>
</dbReference>
<dbReference type="GO" id="GO:0000307">
    <property type="term" value="C:cyclin-dependent protein kinase holoenzyme complex"/>
    <property type="evidence" value="ECO:0000318"/>
    <property type="project" value="GO_Central"/>
</dbReference>
<dbReference type="GO" id="GO:0005737">
    <property type="term" value="C:cytoplasm"/>
    <property type="evidence" value="ECO:0000318"/>
    <property type="project" value="GO_Central"/>
</dbReference>
<dbReference type="GO" id="GO:0005815">
    <property type="term" value="C:microtubule organizing center"/>
    <property type="evidence" value="ECO:0000318"/>
    <property type="project" value="GO_Central"/>
</dbReference>
<dbReference type="GO" id="GO:0005634">
    <property type="term" value="C:nucleus"/>
    <property type="evidence" value="ECO:0000318"/>
    <property type="project" value="GO_Central"/>
</dbReference>
<dbReference type="GO" id="GO:0016538">
    <property type="term" value="F:cyclin-dependent protein serine/threonine kinase regulator activity"/>
    <property type="evidence" value="ECO:0000318"/>
    <property type="project" value="GO_Central"/>
</dbReference>
<dbReference type="GO" id="GO:0000082">
    <property type="term" value="P:G1/S transition of mitotic cell cycle"/>
    <property type="evidence" value="ECO:0000318"/>
    <property type="project" value="GO_Central"/>
</dbReference>
<dbReference type="CDD" id="cd20528">
    <property type="entry name" value="CYCLIN_CCNJ-like_rpt1"/>
    <property type="match status" value="1"/>
</dbReference>
<dbReference type="CDD" id="cd20529">
    <property type="entry name" value="CYCLIN_CCNJ-like_rpt2"/>
    <property type="match status" value="1"/>
</dbReference>
<dbReference type="FunFam" id="1.10.472.10:FF:000022">
    <property type="entry name" value="cyclin-J isoform X1"/>
    <property type="match status" value="1"/>
</dbReference>
<dbReference type="FunFam" id="1.10.472.10:FF:000036">
    <property type="entry name" value="cyclin-J isoform X1"/>
    <property type="match status" value="1"/>
</dbReference>
<dbReference type="Gene3D" id="1.10.472.10">
    <property type="entry name" value="Cyclin-like"/>
    <property type="match status" value="2"/>
</dbReference>
<dbReference type="InterPro" id="IPR039361">
    <property type="entry name" value="Cyclin"/>
</dbReference>
<dbReference type="InterPro" id="IPR013763">
    <property type="entry name" value="Cyclin-like_dom"/>
</dbReference>
<dbReference type="InterPro" id="IPR036915">
    <property type="entry name" value="Cyclin-like_sf"/>
</dbReference>
<dbReference type="InterPro" id="IPR004367">
    <property type="entry name" value="Cyclin_C-dom"/>
</dbReference>
<dbReference type="InterPro" id="IPR006671">
    <property type="entry name" value="Cyclin_N"/>
</dbReference>
<dbReference type="PANTHER" id="PTHR10177">
    <property type="entry name" value="CYCLINS"/>
    <property type="match status" value="1"/>
</dbReference>
<dbReference type="Pfam" id="PF02984">
    <property type="entry name" value="Cyclin_C"/>
    <property type="match status" value="1"/>
</dbReference>
<dbReference type="Pfam" id="PF00134">
    <property type="entry name" value="Cyclin_N"/>
    <property type="match status" value="1"/>
</dbReference>
<dbReference type="SMART" id="SM00385">
    <property type="entry name" value="CYCLIN"/>
    <property type="match status" value="1"/>
</dbReference>
<dbReference type="SMART" id="SM01332">
    <property type="entry name" value="Cyclin_C"/>
    <property type="match status" value="1"/>
</dbReference>
<dbReference type="SUPFAM" id="SSF47954">
    <property type="entry name" value="Cyclin-like"/>
    <property type="match status" value="2"/>
</dbReference>
<proteinExistence type="evidence at protein level"/>
<accession>Q5T5M9</accession>
<accession>B7Z4E7</accession>
<accession>Q86XL1</accession>
<accession>Q9NV69</accession>